<comment type="function">
    <text evidence="1">Catalyzes the condensation of carbamoyl phosphate and aspartate to form carbamoyl aspartate and inorganic phosphate, the committed step in the de novo pyrimidine nucleotide biosynthesis pathway.</text>
</comment>
<comment type="catalytic activity">
    <reaction evidence="1">
        <text>carbamoyl phosphate + L-aspartate = N-carbamoyl-L-aspartate + phosphate + H(+)</text>
        <dbReference type="Rhea" id="RHEA:20013"/>
        <dbReference type="ChEBI" id="CHEBI:15378"/>
        <dbReference type="ChEBI" id="CHEBI:29991"/>
        <dbReference type="ChEBI" id="CHEBI:32814"/>
        <dbReference type="ChEBI" id="CHEBI:43474"/>
        <dbReference type="ChEBI" id="CHEBI:58228"/>
        <dbReference type="EC" id="2.1.3.2"/>
    </reaction>
</comment>
<comment type="pathway">
    <text evidence="1">Pyrimidine metabolism; UMP biosynthesis via de novo pathway; (S)-dihydroorotate from bicarbonate: step 2/3.</text>
</comment>
<comment type="subunit">
    <text evidence="1">Heterooligomer of catalytic and regulatory chains.</text>
</comment>
<comment type="similarity">
    <text evidence="1 2">Belongs to the aspartate/ornithine carbamoyltransferase superfamily. ATCase family.</text>
</comment>
<proteinExistence type="inferred from homology"/>
<feature type="chain" id="PRO_0000113261" description="Aspartate carbamoyltransferase catalytic subunit">
    <location>
        <begin position="1"/>
        <end position="305"/>
    </location>
</feature>
<feature type="binding site" evidence="1">
    <location>
        <position position="56"/>
    </location>
    <ligand>
        <name>carbamoyl phosphate</name>
        <dbReference type="ChEBI" id="CHEBI:58228"/>
    </ligand>
</feature>
<feature type="binding site" evidence="1">
    <location>
        <position position="57"/>
    </location>
    <ligand>
        <name>carbamoyl phosphate</name>
        <dbReference type="ChEBI" id="CHEBI:58228"/>
    </ligand>
</feature>
<feature type="binding site" evidence="1">
    <location>
        <position position="85"/>
    </location>
    <ligand>
        <name>L-aspartate</name>
        <dbReference type="ChEBI" id="CHEBI:29991"/>
    </ligand>
</feature>
<feature type="binding site" evidence="1">
    <location>
        <position position="106"/>
    </location>
    <ligand>
        <name>carbamoyl phosphate</name>
        <dbReference type="ChEBI" id="CHEBI:58228"/>
    </ligand>
</feature>
<feature type="binding site" evidence="1">
    <location>
        <position position="134"/>
    </location>
    <ligand>
        <name>carbamoyl phosphate</name>
        <dbReference type="ChEBI" id="CHEBI:58228"/>
    </ligand>
</feature>
<feature type="binding site" evidence="1">
    <location>
        <position position="137"/>
    </location>
    <ligand>
        <name>carbamoyl phosphate</name>
        <dbReference type="ChEBI" id="CHEBI:58228"/>
    </ligand>
</feature>
<feature type="binding site" evidence="1">
    <location>
        <position position="167"/>
    </location>
    <ligand>
        <name>L-aspartate</name>
        <dbReference type="ChEBI" id="CHEBI:29991"/>
    </ligand>
</feature>
<feature type="binding site" evidence="1">
    <location>
        <position position="227"/>
    </location>
    <ligand>
        <name>L-aspartate</name>
        <dbReference type="ChEBI" id="CHEBI:29991"/>
    </ligand>
</feature>
<feature type="binding site" evidence="1">
    <location>
        <position position="266"/>
    </location>
    <ligand>
        <name>carbamoyl phosphate</name>
        <dbReference type="ChEBI" id="CHEBI:58228"/>
    </ligand>
</feature>
<feature type="binding site" evidence="1">
    <location>
        <position position="267"/>
    </location>
    <ligand>
        <name>carbamoyl phosphate</name>
        <dbReference type="ChEBI" id="CHEBI:58228"/>
    </ligand>
</feature>
<dbReference type="EC" id="2.1.3.2" evidence="1"/>
<dbReference type="EMBL" id="AL445064">
    <property type="protein sequence ID" value="CAC11715.1"/>
    <property type="molecule type" value="Genomic_DNA"/>
</dbReference>
<dbReference type="RefSeq" id="WP_010901000.1">
    <property type="nucleotide sequence ID" value="NC_002578.1"/>
</dbReference>
<dbReference type="SMR" id="Q9HKM2"/>
<dbReference type="FunCoup" id="Q9HKM2">
    <property type="interactions" value="180"/>
</dbReference>
<dbReference type="STRING" id="273075.gene:9571795"/>
<dbReference type="PaxDb" id="273075-Ta0575"/>
<dbReference type="EnsemblBacteria" id="CAC11715">
    <property type="protein sequence ID" value="CAC11715"/>
    <property type="gene ID" value="CAC11715"/>
</dbReference>
<dbReference type="KEGG" id="tac:Ta0575"/>
<dbReference type="eggNOG" id="arCOG00911">
    <property type="taxonomic scope" value="Archaea"/>
</dbReference>
<dbReference type="HOGENOM" id="CLU_043846_1_2_2"/>
<dbReference type="InParanoid" id="Q9HKM2"/>
<dbReference type="OrthoDB" id="7792at2157"/>
<dbReference type="UniPathway" id="UPA00070">
    <property type="reaction ID" value="UER00116"/>
</dbReference>
<dbReference type="Proteomes" id="UP000001024">
    <property type="component" value="Chromosome"/>
</dbReference>
<dbReference type="GO" id="GO:0016597">
    <property type="term" value="F:amino acid binding"/>
    <property type="evidence" value="ECO:0007669"/>
    <property type="project" value="InterPro"/>
</dbReference>
<dbReference type="GO" id="GO:0004070">
    <property type="term" value="F:aspartate carbamoyltransferase activity"/>
    <property type="evidence" value="ECO:0007669"/>
    <property type="project" value="UniProtKB-UniRule"/>
</dbReference>
<dbReference type="GO" id="GO:0006207">
    <property type="term" value="P:'de novo' pyrimidine nucleobase biosynthetic process"/>
    <property type="evidence" value="ECO:0007669"/>
    <property type="project" value="InterPro"/>
</dbReference>
<dbReference type="GO" id="GO:0044205">
    <property type="term" value="P:'de novo' UMP biosynthetic process"/>
    <property type="evidence" value="ECO:0007669"/>
    <property type="project" value="UniProtKB-UniRule"/>
</dbReference>
<dbReference type="GO" id="GO:0006520">
    <property type="term" value="P:amino acid metabolic process"/>
    <property type="evidence" value="ECO:0007669"/>
    <property type="project" value="InterPro"/>
</dbReference>
<dbReference type="FunFam" id="3.40.50.1370:FF:000001">
    <property type="entry name" value="Aspartate carbamoyltransferase"/>
    <property type="match status" value="1"/>
</dbReference>
<dbReference type="FunFam" id="3.40.50.1370:FF:000002">
    <property type="entry name" value="Aspartate carbamoyltransferase 2"/>
    <property type="match status" value="1"/>
</dbReference>
<dbReference type="Gene3D" id="3.40.50.1370">
    <property type="entry name" value="Aspartate/ornithine carbamoyltransferase"/>
    <property type="match status" value="2"/>
</dbReference>
<dbReference type="HAMAP" id="MF_00001">
    <property type="entry name" value="Asp_carb_tr"/>
    <property type="match status" value="1"/>
</dbReference>
<dbReference type="InterPro" id="IPR006132">
    <property type="entry name" value="Asp/Orn_carbamoyltranf_P-bd"/>
</dbReference>
<dbReference type="InterPro" id="IPR006130">
    <property type="entry name" value="Asp/Orn_carbamoylTrfase"/>
</dbReference>
<dbReference type="InterPro" id="IPR036901">
    <property type="entry name" value="Asp/Orn_carbamoylTrfase_sf"/>
</dbReference>
<dbReference type="InterPro" id="IPR002082">
    <property type="entry name" value="Asp_carbamoyltransf"/>
</dbReference>
<dbReference type="InterPro" id="IPR006131">
    <property type="entry name" value="Asp_carbamoyltransf_Asp/Orn-bd"/>
</dbReference>
<dbReference type="NCBIfam" id="TIGR00670">
    <property type="entry name" value="asp_carb_tr"/>
    <property type="match status" value="1"/>
</dbReference>
<dbReference type="NCBIfam" id="NF002032">
    <property type="entry name" value="PRK00856.1"/>
    <property type="match status" value="1"/>
</dbReference>
<dbReference type="PANTHER" id="PTHR45753:SF6">
    <property type="entry name" value="ASPARTATE CARBAMOYLTRANSFERASE"/>
    <property type="match status" value="1"/>
</dbReference>
<dbReference type="PANTHER" id="PTHR45753">
    <property type="entry name" value="ORNITHINE CARBAMOYLTRANSFERASE, MITOCHONDRIAL"/>
    <property type="match status" value="1"/>
</dbReference>
<dbReference type="Pfam" id="PF00185">
    <property type="entry name" value="OTCace"/>
    <property type="match status" value="1"/>
</dbReference>
<dbReference type="Pfam" id="PF02729">
    <property type="entry name" value="OTCace_N"/>
    <property type="match status" value="1"/>
</dbReference>
<dbReference type="PRINTS" id="PR00100">
    <property type="entry name" value="AOTCASE"/>
</dbReference>
<dbReference type="PRINTS" id="PR00101">
    <property type="entry name" value="ATCASE"/>
</dbReference>
<dbReference type="SUPFAM" id="SSF53671">
    <property type="entry name" value="Aspartate/ornithine carbamoyltransferase"/>
    <property type="match status" value="1"/>
</dbReference>
<dbReference type="PROSITE" id="PS00097">
    <property type="entry name" value="CARBAMOYLTRANSFERASE"/>
    <property type="match status" value="1"/>
</dbReference>
<evidence type="ECO:0000255" key="1">
    <source>
        <dbReference type="HAMAP-Rule" id="MF_00001"/>
    </source>
</evidence>
<evidence type="ECO:0000305" key="2"/>
<name>PYRB_THEAC</name>
<sequence>MLKNRSVVSIEDVDIDDLNDLFDLSDSMLKTIEKGGSTDLLRNRIMATLFYEPSTRTRLSFESAMHRLGGSVITVSDVKTSSVAKGETLADTIRMASSYSDIIVIRHPLEGAARLASKFANKPVINAGDGSGQHPTQTILDLYTIKRETGSIDGKTITMVGDLRYGRTIHSLIIALSRFDVRINLVSPQILKLPEYVLTKIGDRSRIMEYDDLSKVIEDTDVLYVTRIQKERFSDQNEYQSVIGSYSVDRDLVSRMKKDAIIMHPLPRIDEIKPEVDELPQARYFKQAYYGVPVRMALIYRILGD</sequence>
<organism>
    <name type="scientific">Thermoplasma acidophilum (strain ATCC 25905 / DSM 1728 / JCM 9062 / NBRC 15155 / AMRC-C165)</name>
    <dbReference type="NCBI Taxonomy" id="273075"/>
    <lineage>
        <taxon>Archaea</taxon>
        <taxon>Methanobacteriati</taxon>
        <taxon>Thermoplasmatota</taxon>
        <taxon>Thermoplasmata</taxon>
        <taxon>Thermoplasmatales</taxon>
        <taxon>Thermoplasmataceae</taxon>
        <taxon>Thermoplasma</taxon>
    </lineage>
</organism>
<accession>Q9HKM2</accession>
<reference key="1">
    <citation type="journal article" date="2000" name="Nature">
        <title>The genome sequence of the thermoacidophilic scavenger Thermoplasma acidophilum.</title>
        <authorList>
            <person name="Ruepp A."/>
            <person name="Graml W."/>
            <person name="Santos-Martinez M.-L."/>
            <person name="Koretke K.K."/>
            <person name="Volker C."/>
            <person name="Mewes H.-W."/>
            <person name="Frishman D."/>
            <person name="Stocker S."/>
            <person name="Lupas A.N."/>
            <person name="Baumeister W."/>
        </authorList>
    </citation>
    <scope>NUCLEOTIDE SEQUENCE [LARGE SCALE GENOMIC DNA]</scope>
    <source>
        <strain>ATCC 25905 / DSM 1728 / JCM 9062 / NBRC 15155 / AMRC-C165</strain>
    </source>
</reference>
<keyword id="KW-0665">Pyrimidine biosynthesis</keyword>
<keyword id="KW-1185">Reference proteome</keyword>
<keyword id="KW-0808">Transferase</keyword>
<protein>
    <recommendedName>
        <fullName evidence="1">Aspartate carbamoyltransferase catalytic subunit</fullName>
        <ecNumber evidence="1">2.1.3.2</ecNumber>
    </recommendedName>
    <alternativeName>
        <fullName evidence="1">Aspartate transcarbamylase</fullName>
        <shortName evidence="1">ATCase</shortName>
    </alternativeName>
</protein>
<gene>
    <name evidence="1" type="primary">pyrB</name>
    <name type="ordered locus">Ta0575</name>
</gene>